<sequence>MATPSNKNSKSHKRNRRGHIGLNVPNIVLDQTTGEYRVSHRVSPSGVYNGKQVIDKK</sequence>
<accession>Q03W83</accession>
<protein>
    <recommendedName>
        <fullName evidence="1">Large ribosomal subunit protein bL32</fullName>
    </recommendedName>
    <alternativeName>
        <fullName evidence="3">50S ribosomal protein L32</fullName>
    </alternativeName>
</protein>
<feature type="chain" id="PRO_0000296492" description="Large ribosomal subunit protein bL32">
    <location>
        <begin position="1"/>
        <end position="57"/>
    </location>
</feature>
<feature type="region of interest" description="Disordered" evidence="2">
    <location>
        <begin position="1"/>
        <end position="25"/>
    </location>
</feature>
<feature type="compositionally biased region" description="Basic residues" evidence="2">
    <location>
        <begin position="9"/>
        <end position="19"/>
    </location>
</feature>
<gene>
    <name evidence="1" type="primary">rpmF</name>
    <name type="ordered locus">LEUM_1446</name>
</gene>
<comment type="similarity">
    <text evidence="1">Belongs to the bacterial ribosomal protein bL32 family.</text>
</comment>
<proteinExistence type="inferred from homology"/>
<evidence type="ECO:0000255" key="1">
    <source>
        <dbReference type="HAMAP-Rule" id="MF_00340"/>
    </source>
</evidence>
<evidence type="ECO:0000256" key="2">
    <source>
        <dbReference type="SAM" id="MobiDB-lite"/>
    </source>
</evidence>
<evidence type="ECO:0000305" key="3"/>
<reference key="1">
    <citation type="journal article" date="2006" name="Proc. Natl. Acad. Sci. U.S.A.">
        <title>Comparative genomics of the lactic acid bacteria.</title>
        <authorList>
            <person name="Makarova K.S."/>
            <person name="Slesarev A."/>
            <person name="Wolf Y.I."/>
            <person name="Sorokin A."/>
            <person name="Mirkin B."/>
            <person name="Koonin E.V."/>
            <person name="Pavlov A."/>
            <person name="Pavlova N."/>
            <person name="Karamychev V."/>
            <person name="Polouchine N."/>
            <person name="Shakhova V."/>
            <person name="Grigoriev I."/>
            <person name="Lou Y."/>
            <person name="Rohksar D."/>
            <person name="Lucas S."/>
            <person name="Huang K."/>
            <person name="Goodstein D.M."/>
            <person name="Hawkins T."/>
            <person name="Plengvidhya V."/>
            <person name="Welker D."/>
            <person name="Hughes J."/>
            <person name="Goh Y."/>
            <person name="Benson A."/>
            <person name="Baldwin K."/>
            <person name="Lee J.-H."/>
            <person name="Diaz-Muniz I."/>
            <person name="Dosti B."/>
            <person name="Smeianov V."/>
            <person name="Wechter W."/>
            <person name="Barabote R."/>
            <person name="Lorca G."/>
            <person name="Altermann E."/>
            <person name="Barrangou R."/>
            <person name="Ganesan B."/>
            <person name="Xie Y."/>
            <person name="Rawsthorne H."/>
            <person name="Tamir D."/>
            <person name="Parker C."/>
            <person name="Breidt F."/>
            <person name="Broadbent J.R."/>
            <person name="Hutkins R."/>
            <person name="O'Sullivan D."/>
            <person name="Steele J."/>
            <person name="Unlu G."/>
            <person name="Saier M.H. Jr."/>
            <person name="Klaenhammer T."/>
            <person name="Richardson P."/>
            <person name="Kozyavkin S."/>
            <person name="Weimer B.C."/>
            <person name="Mills D.A."/>
        </authorList>
    </citation>
    <scope>NUCLEOTIDE SEQUENCE [LARGE SCALE GENOMIC DNA]</scope>
    <source>
        <strain>ATCC 8293 / DSM 20343 / BCRC 11652 / CCM 1803 / JCM 6124 / NCDO 523 / NBRC 100496 / NCIMB 8023 / NCTC 12954 / NRRL B-1118 / 37Y</strain>
    </source>
</reference>
<keyword id="KW-1185">Reference proteome</keyword>
<keyword id="KW-0687">Ribonucleoprotein</keyword>
<keyword id="KW-0689">Ribosomal protein</keyword>
<dbReference type="EMBL" id="CP000414">
    <property type="protein sequence ID" value="ABJ62539.1"/>
    <property type="molecule type" value="Genomic_DNA"/>
</dbReference>
<dbReference type="RefSeq" id="WP_002815130.1">
    <property type="nucleotide sequence ID" value="NC_008531.1"/>
</dbReference>
<dbReference type="SMR" id="Q03W83"/>
<dbReference type="EnsemblBacteria" id="ABJ62539">
    <property type="protein sequence ID" value="ABJ62539"/>
    <property type="gene ID" value="LEUM_1446"/>
</dbReference>
<dbReference type="GeneID" id="29576536"/>
<dbReference type="KEGG" id="lme:LEUM_1446"/>
<dbReference type="eggNOG" id="COG0333">
    <property type="taxonomic scope" value="Bacteria"/>
</dbReference>
<dbReference type="HOGENOM" id="CLU_129084_2_0_9"/>
<dbReference type="Proteomes" id="UP000000362">
    <property type="component" value="Chromosome"/>
</dbReference>
<dbReference type="GO" id="GO:0015934">
    <property type="term" value="C:large ribosomal subunit"/>
    <property type="evidence" value="ECO:0007669"/>
    <property type="project" value="InterPro"/>
</dbReference>
<dbReference type="GO" id="GO:0003735">
    <property type="term" value="F:structural constituent of ribosome"/>
    <property type="evidence" value="ECO:0007669"/>
    <property type="project" value="InterPro"/>
</dbReference>
<dbReference type="GO" id="GO:0006412">
    <property type="term" value="P:translation"/>
    <property type="evidence" value="ECO:0007669"/>
    <property type="project" value="UniProtKB-UniRule"/>
</dbReference>
<dbReference type="HAMAP" id="MF_00340">
    <property type="entry name" value="Ribosomal_bL32"/>
    <property type="match status" value="1"/>
</dbReference>
<dbReference type="InterPro" id="IPR002677">
    <property type="entry name" value="Ribosomal_bL32"/>
</dbReference>
<dbReference type="InterPro" id="IPR044957">
    <property type="entry name" value="Ribosomal_bL32_bact"/>
</dbReference>
<dbReference type="InterPro" id="IPR011332">
    <property type="entry name" value="Ribosomal_zn-bd"/>
</dbReference>
<dbReference type="NCBIfam" id="TIGR01031">
    <property type="entry name" value="rpmF_bact"/>
    <property type="match status" value="1"/>
</dbReference>
<dbReference type="PANTHER" id="PTHR35534">
    <property type="entry name" value="50S RIBOSOMAL PROTEIN L32"/>
    <property type="match status" value="1"/>
</dbReference>
<dbReference type="PANTHER" id="PTHR35534:SF1">
    <property type="entry name" value="LARGE RIBOSOMAL SUBUNIT PROTEIN BL32"/>
    <property type="match status" value="1"/>
</dbReference>
<dbReference type="Pfam" id="PF01783">
    <property type="entry name" value="Ribosomal_L32p"/>
    <property type="match status" value="1"/>
</dbReference>
<dbReference type="SUPFAM" id="SSF57829">
    <property type="entry name" value="Zn-binding ribosomal proteins"/>
    <property type="match status" value="1"/>
</dbReference>
<name>RL32_LEUMM</name>
<organism>
    <name type="scientific">Leuconostoc mesenteroides subsp. mesenteroides (strain ATCC 8293 / DSM 20343 / BCRC 11652 / CCM 1803 / JCM 6124 / NCDO 523 / NBRC 100496 / NCIMB 8023 / NCTC 12954 / NRRL B-1118 / 37Y)</name>
    <dbReference type="NCBI Taxonomy" id="203120"/>
    <lineage>
        <taxon>Bacteria</taxon>
        <taxon>Bacillati</taxon>
        <taxon>Bacillota</taxon>
        <taxon>Bacilli</taxon>
        <taxon>Lactobacillales</taxon>
        <taxon>Lactobacillaceae</taxon>
        <taxon>Leuconostoc</taxon>
    </lineage>
</organism>